<keyword id="KW-1003">Cell membrane</keyword>
<keyword id="KW-0342">GTP-binding</keyword>
<keyword id="KW-0378">Hydrolase</keyword>
<keyword id="KW-0472">Membrane</keyword>
<keyword id="KW-0547">Nucleotide-binding</keyword>
<keyword id="KW-0648">Protein biosynthesis</keyword>
<keyword id="KW-1185">Reference proteome</keyword>
<proteinExistence type="inferred from homology"/>
<reference key="1">
    <citation type="journal article" date="2009" name="BMC Genomics">
        <title>Evidence for niche adaptation in the genome of the bovine pathogen Streptococcus uberis.</title>
        <authorList>
            <person name="Ward P.N."/>
            <person name="Holden M.T.G."/>
            <person name="Leigh J.A."/>
            <person name="Lennard N."/>
            <person name="Bignell A."/>
            <person name="Barron A."/>
            <person name="Clark L."/>
            <person name="Quail M.A."/>
            <person name="Woodward J."/>
            <person name="Barrell B.G."/>
            <person name="Egan S.A."/>
            <person name="Field T.R."/>
            <person name="Maskell D."/>
            <person name="Kehoe M."/>
            <person name="Dowson C.G."/>
            <person name="Chanter N."/>
            <person name="Whatmore A.M."/>
            <person name="Bentley S.D."/>
            <person name="Parkhill J."/>
        </authorList>
    </citation>
    <scope>NUCLEOTIDE SEQUENCE [LARGE SCALE GENOMIC DNA]</scope>
    <source>
        <strain>ATCC BAA-854 / 0140J</strain>
    </source>
</reference>
<name>LEPA_STRU0</name>
<dbReference type="EC" id="3.6.5.n1" evidence="1"/>
<dbReference type="EMBL" id="AM946015">
    <property type="protein sequence ID" value="CAR42386.1"/>
    <property type="molecule type" value="Genomic_DNA"/>
</dbReference>
<dbReference type="RefSeq" id="WP_012658572.1">
    <property type="nucleotide sequence ID" value="NC_012004.1"/>
</dbReference>
<dbReference type="SMR" id="B9DSE0"/>
<dbReference type="STRING" id="218495.SUB1082"/>
<dbReference type="KEGG" id="sub:SUB1082"/>
<dbReference type="eggNOG" id="COG0481">
    <property type="taxonomic scope" value="Bacteria"/>
</dbReference>
<dbReference type="HOGENOM" id="CLU_009995_3_3_9"/>
<dbReference type="OrthoDB" id="9801591at2"/>
<dbReference type="Proteomes" id="UP000000449">
    <property type="component" value="Chromosome"/>
</dbReference>
<dbReference type="GO" id="GO:0005886">
    <property type="term" value="C:plasma membrane"/>
    <property type="evidence" value="ECO:0007669"/>
    <property type="project" value="UniProtKB-SubCell"/>
</dbReference>
<dbReference type="GO" id="GO:0005525">
    <property type="term" value="F:GTP binding"/>
    <property type="evidence" value="ECO:0007669"/>
    <property type="project" value="UniProtKB-UniRule"/>
</dbReference>
<dbReference type="GO" id="GO:0003924">
    <property type="term" value="F:GTPase activity"/>
    <property type="evidence" value="ECO:0007669"/>
    <property type="project" value="UniProtKB-UniRule"/>
</dbReference>
<dbReference type="GO" id="GO:0043022">
    <property type="term" value="F:ribosome binding"/>
    <property type="evidence" value="ECO:0007669"/>
    <property type="project" value="UniProtKB-UniRule"/>
</dbReference>
<dbReference type="GO" id="GO:0003746">
    <property type="term" value="F:translation elongation factor activity"/>
    <property type="evidence" value="ECO:0007669"/>
    <property type="project" value="UniProtKB-UniRule"/>
</dbReference>
<dbReference type="GO" id="GO:0045727">
    <property type="term" value="P:positive regulation of translation"/>
    <property type="evidence" value="ECO:0007669"/>
    <property type="project" value="UniProtKB-UniRule"/>
</dbReference>
<dbReference type="CDD" id="cd03699">
    <property type="entry name" value="EF4_II"/>
    <property type="match status" value="1"/>
</dbReference>
<dbReference type="CDD" id="cd16260">
    <property type="entry name" value="EF4_III"/>
    <property type="match status" value="1"/>
</dbReference>
<dbReference type="CDD" id="cd01890">
    <property type="entry name" value="LepA"/>
    <property type="match status" value="1"/>
</dbReference>
<dbReference type="CDD" id="cd03709">
    <property type="entry name" value="lepA_C"/>
    <property type="match status" value="1"/>
</dbReference>
<dbReference type="FunFam" id="3.40.50.300:FF:000078">
    <property type="entry name" value="Elongation factor 4"/>
    <property type="match status" value="1"/>
</dbReference>
<dbReference type="FunFam" id="2.40.30.10:FF:000015">
    <property type="entry name" value="Translation factor GUF1, mitochondrial"/>
    <property type="match status" value="1"/>
</dbReference>
<dbReference type="FunFam" id="3.30.70.240:FF:000007">
    <property type="entry name" value="Translation factor GUF1, mitochondrial"/>
    <property type="match status" value="1"/>
</dbReference>
<dbReference type="FunFam" id="3.30.70.2570:FF:000001">
    <property type="entry name" value="Translation factor GUF1, mitochondrial"/>
    <property type="match status" value="1"/>
</dbReference>
<dbReference type="FunFam" id="3.30.70.870:FF:000004">
    <property type="entry name" value="Translation factor GUF1, mitochondrial"/>
    <property type="match status" value="1"/>
</dbReference>
<dbReference type="Gene3D" id="3.30.70.240">
    <property type="match status" value="1"/>
</dbReference>
<dbReference type="Gene3D" id="3.30.70.2570">
    <property type="entry name" value="Elongation factor 4, C-terminal domain"/>
    <property type="match status" value="1"/>
</dbReference>
<dbReference type="Gene3D" id="3.30.70.870">
    <property type="entry name" value="Elongation Factor G (Translational Gtpase), domain 3"/>
    <property type="match status" value="1"/>
</dbReference>
<dbReference type="Gene3D" id="3.40.50.300">
    <property type="entry name" value="P-loop containing nucleotide triphosphate hydrolases"/>
    <property type="match status" value="1"/>
</dbReference>
<dbReference type="Gene3D" id="2.40.30.10">
    <property type="entry name" value="Translation factors"/>
    <property type="match status" value="1"/>
</dbReference>
<dbReference type="HAMAP" id="MF_00071">
    <property type="entry name" value="LepA"/>
    <property type="match status" value="1"/>
</dbReference>
<dbReference type="InterPro" id="IPR006297">
    <property type="entry name" value="EF-4"/>
</dbReference>
<dbReference type="InterPro" id="IPR035647">
    <property type="entry name" value="EFG_III/V"/>
</dbReference>
<dbReference type="InterPro" id="IPR000640">
    <property type="entry name" value="EFG_V-like"/>
</dbReference>
<dbReference type="InterPro" id="IPR004161">
    <property type="entry name" value="EFTu-like_2"/>
</dbReference>
<dbReference type="InterPro" id="IPR031157">
    <property type="entry name" value="G_TR_CS"/>
</dbReference>
<dbReference type="InterPro" id="IPR038363">
    <property type="entry name" value="LepA_C_sf"/>
</dbReference>
<dbReference type="InterPro" id="IPR013842">
    <property type="entry name" value="LepA_CTD"/>
</dbReference>
<dbReference type="InterPro" id="IPR035654">
    <property type="entry name" value="LepA_IV"/>
</dbReference>
<dbReference type="InterPro" id="IPR027417">
    <property type="entry name" value="P-loop_NTPase"/>
</dbReference>
<dbReference type="InterPro" id="IPR005225">
    <property type="entry name" value="Small_GTP-bd"/>
</dbReference>
<dbReference type="InterPro" id="IPR000795">
    <property type="entry name" value="T_Tr_GTP-bd_dom"/>
</dbReference>
<dbReference type="NCBIfam" id="TIGR01393">
    <property type="entry name" value="lepA"/>
    <property type="match status" value="1"/>
</dbReference>
<dbReference type="NCBIfam" id="TIGR00231">
    <property type="entry name" value="small_GTP"/>
    <property type="match status" value="1"/>
</dbReference>
<dbReference type="PANTHER" id="PTHR43512:SF4">
    <property type="entry name" value="TRANSLATION FACTOR GUF1 HOMOLOG, CHLOROPLASTIC"/>
    <property type="match status" value="1"/>
</dbReference>
<dbReference type="PANTHER" id="PTHR43512">
    <property type="entry name" value="TRANSLATION FACTOR GUF1-RELATED"/>
    <property type="match status" value="1"/>
</dbReference>
<dbReference type="Pfam" id="PF00679">
    <property type="entry name" value="EFG_C"/>
    <property type="match status" value="1"/>
</dbReference>
<dbReference type="Pfam" id="PF00009">
    <property type="entry name" value="GTP_EFTU"/>
    <property type="match status" value="1"/>
</dbReference>
<dbReference type="Pfam" id="PF03144">
    <property type="entry name" value="GTP_EFTU_D2"/>
    <property type="match status" value="1"/>
</dbReference>
<dbReference type="Pfam" id="PF06421">
    <property type="entry name" value="LepA_C"/>
    <property type="match status" value="1"/>
</dbReference>
<dbReference type="PRINTS" id="PR00315">
    <property type="entry name" value="ELONGATNFCT"/>
</dbReference>
<dbReference type="SMART" id="SM00838">
    <property type="entry name" value="EFG_C"/>
    <property type="match status" value="1"/>
</dbReference>
<dbReference type="SUPFAM" id="SSF54980">
    <property type="entry name" value="EF-G C-terminal domain-like"/>
    <property type="match status" value="2"/>
</dbReference>
<dbReference type="SUPFAM" id="SSF52540">
    <property type="entry name" value="P-loop containing nucleoside triphosphate hydrolases"/>
    <property type="match status" value="1"/>
</dbReference>
<dbReference type="PROSITE" id="PS00301">
    <property type="entry name" value="G_TR_1"/>
    <property type="match status" value="1"/>
</dbReference>
<dbReference type="PROSITE" id="PS51722">
    <property type="entry name" value="G_TR_2"/>
    <property type="match status" value="1"/>
</dbReference>
<comment type="function">
    <text evidence="1">Required for accurate and efficient protein synthesis under certain stress conditions. May act as a fidelity factor of the translation reaction, by catalyzing a one-codon backward translocation of tRNAs on improperly translocated ribosomes. Back-translocation proceeds from a post-translocation (POST) complex to a pre-translocation (PRE) complex, thus giving elongation factor G a second chance to translocate the tRNAs correctly. Binds to ribosomes in a GTP-dependent manner.</text>
</comment>
<comment type="catalytic activity">
    <reaction evidence="1">
        <text>GTP + H2O = GDP + phosphate + H(+)</text>
        <dbReference type="Rhea" id="RHEA:19669"/>
        <dbReference type="ChEBI" id="CHEBI:15377"/>
        <dbReference type="ChEBI" id="CHEBI:15378"/>
        <dbReference type="ChEBI" id="CHEBI:37565"/>
        <dbReference type="ChEBI" id="CHEBI:43474"/>
        <dbReference type="ChEBI" id="CHEBI:58189"/>
        <dbReference type="EC" id="3.6.5.n1"/>
    </reaction>
</comment>
<comment type="subcellular location">
    <subcellularLocation>
        <location evidence="1">Cell membrane</location>
        <topology evidence="1">Peripheral membrane protein</topology>
        <orientation evidence="1">Cytoplasmic side</orientation>
    </subcellularLocation>
</comment>
<comment type="similarity">
    <text evidence="1">Belongs to the TRAFAC class translation factor GTPase superfamily. Classic translation factor GTPase family. LepA subfamily.</text>
</comment>
<feature type="chain" id="PRO_1000190835" description="Elongation factor 4">
    <location>
        <begin position="1"/>
        <end position="610"/>
    </location>
</feature>
<feature type="domain" description="tr-type G">
    <location>
        <begin position="11"/>
        <end position="193"/>
    </location>
</feature>
<feature type="binding site" evidence="1">
    <location>
        <begin position="23"/>
        <end position="28"/>
    </location>
    <ligand>
        <name>GTP</name>
        <dbReference type="ChEBI" id="CHEBI:37565"/>
    </ligand>
</feature>
<feature type="binding site" evidence="1">
    <location>
        <begin position="140"/>
        <end position="143"/>
    </location>
    <ligand>
        <name>GTP</name>
        <dbReference type="ChEBI" id="CHEBI:37565"/>
    </ligand>
</feature>
<evidence type="ECO:0000255" key="1">
    <source>
        <dbReference type="HAMAP-Rule" id="MF_00071"/>
    </source>
</evidence>
<protein>
    <recommendedName>
        <fullName evidence="1">Elongation factor 4</fullName>
        <shortName evidence="1">EF-4</shortName>
        <ecNumber evidence="1">3.6.5.n1</ecNumber>
    </recommendedName>
    <alternativeName>
        <fullName evidence="1">Ribosomal back-translocase LepA</fullName>
    </alternativeName>
</protein>
<organism>
    <name type="scientific">Streptococcus uberis (strain ATCC BAA-854 / 0140J)</name>
    <dbReference type="NCBI Taxonomy" id="218495"/>
    <lineage>
        <taxon>Bacteria</taxon>
        <taxon>Bacillati</taxon>
        <taxon>Bacillota</taxon>
        <taxon>Bacilli</taxon>
        <taxon>Lactobacillales</taxon>
        <taxon>Streptococcaceae</taxon>
        <taxon>Streptococcus</taxon>
    </lineage>
</organism>
<sequence length="610" mass="67922">MNSQELKNRQEKIRNFSIIAHIDHGKSTLADRILEKTETVSSREMQAQLLDSMDLERERGITIKLNAIELNYTAKDGETYILHLIDTPGHVDFTYEVSRSLAACEGAVLVVDAAQGIEAQTLANVYLALDNDLEILPVINKIDLPAADPERVRQEIEDVIGLDASEAVLASAKAGIGIEEILEQIVEKVPAPSGDVDAPLQALIFDSVYDAYRGVILQVRIINGVVKPGDKIQMMSNGKSFDVTEVGIFTPKAVGRDFLATGDVGYIAASIKTVADTRVGDTVTLANNPASEPLDGYKQMNPMVFAGLYPIESNKYNDLREALEKLQLNDASLQFEPETSQALGFGFRCGFLGLLHMDVIQERLEREFNIDLIMTAPSVVYHINTTDGEMLAVSNPSEFPDPTKVDSIEEPYVKAQIMVPQEFVGAVMELAQRKRGDFVTMDYIDDNRVNVIYQIPLAEIVFDFFDKLKSSTRGYASFDYEISEYRKSQLVKMDILLNGDKVDALSFIVHREFAYERGKLIVEKLKKIIPRQQFEVPIQAAIGQKIVARSDIKALRKNVLAKCYGGDVSRKRKLLEKQKAGKKRMKAIGSVEVPQEAFLSVLSMDEDTKK</sequence>
<gene>
    <name evidence="1" type="primary">lepA</name>
    <name type="ordered locus">SUB1082</name>
</gene>
<accession>B9DSE0</accession>